<feature type="chain" id="PRO_0000194929" description="Protein GRISEA">
    <location>
        <begin position="1"/>
        <end position="597"/>
    </location>
</feature>
<feature type="DNA-binding region" description="Copper-fist" evidence="3">
    <location>
        <begin position="1"/>
        <end position="41"/>
    </location>
</feature>
<feature type="region of interest" description="Disordered" evidence="4">
    <location>
        <begin position="70"/>
        <end position="115"/>
    </location>
</feature>
<feature type="region of interest" description="Disordered" evidence="4">
    <location>
        <begin position="233"/>
        <end position="352"/>
    </location>
</feature>
<feature type="region of interest" description="Disordered" evidence="4">
    <location>
        <begin position="407"/>
        <end position="428"/>
    </location>
</feature>
<feature type="region of interest" description="Disordered" evidence="4">
    <location>
        <begin position="467"/>
        <end position="541"/>
    </location>
</feature>
<feature type="compositionally biased region" description="Polar residues" evidence="4">
    <location>
        <begin position="92"/>
        <end position="103"/>
    </location>
</feature>
<feature type="compositionally biased region" description="Low complexity" evidence="4">
    <location>
        <begin position="104"/>
        <end position="115"/>
    </location>
</feature>
<feature type="compositionally biased region" description="Gly residues" evidence="4">
    <location>
        <begin position="269"/>
        <end position="281"/>
    </location>
</feature>
<feature type="compositionally biased region" description="Pro residues" evidence="4">
    <location>
        <begin position="287"/>
        <end position="314"/>
    </location>
</feature>
<feature type="compositionally biased region" description="Low complexity" evidence="4">
    <location>
        <begin position="469"/>
        <end position="495"/>
    </location>
</feature>
<feature type="compositionally biased region" description="Polar residues" evidence="4">
    <location>
        <begin position="521"/>
        <end position="530"/>
    </location>
</feature>
<feature type="binding site" evidence="2 3">
    <location>
        <position position="11"/>
    </location>
    <ligand>
        <name>Zn(2+)</name>
        <dbReference type="ChEBI" id="CHEBI:29105"/>
    </ligand>
</feature>
<feature type="binding site" evidence="2 3">
    <location>
        <position position="14"/>
    </location>
    <ligand>
        <name>Zn(2+)</name>
        <dbReference type="ChEBI" id="CHEBI:29105"/>
    </ligand>
</feature>
<feature type="binding site" evidence="2 3">
    <location>
        <position position="23"/>
    </location>
    <ligand>
        <name>Zn(2+)</name>
        <dbReference type="ChEBI" id="CHEBI:29105"/>
    </ligand>
</feature>
<feature type="binding site" evidence="2 3">
    <location>
        <position position="25"/>
    </location>
    <ligand>
        <name>Zn(2+)</name>
        <dbReference type="ChEBI" id="CHEBI:29105"/>
    </ligand>
</feature>
<accession>Q92258</accession>
<keyword id="KW-0010">Activator</keyword>
<keyword id="KW-0186">Copper</keyword>
<keyword id="KW-0238">DNA-binding</keyword>
<keyword id="KW-0479">Metal-binding</keyword>
<keyword id="KW-0539">Nucleus</keyword>
<keyword id="KW-0804">Transcription</keyword>
<keyword id="KW-0805">Transcription regulation</keyword>
<keyword id="KW-0862">Zinc</keyword>
<comment type="function">
    <text evidence="5 6 7">Copper-sensing transcription factor that regulates copper uptake by transactivation of Ctr3, a high affinity copper permease. Binds to the palindromic UAS sequence 5'-TGTTGCTCANNNNAGAGCAACT-3'. Also transactivates Sod2, a mitochondrial manganese superoxide dismutase through the palindromic UAS sequence 5'-GTTTGCTCA-3' with 352 bp separating the two inverted repeats. Loss of function indirectly leads to rearrangement of mitochondrial DNA associated with senescence in wild-type strains.</text>
</comment>
<comment type="subcellular location">
    <subcellularLocation>
        <location evidence="1">Nucleus</location>
    </subcellularLocation>
</comment>
<dbReference type="EMBL" id="X89429">
    <property type="protein sequence ID" value="CAA61598.1"/>
    <property type="molecule type" value="Genomic_DNA"/>
</dbReference>
<dbReference type="PIR" id="S72468">
    <property type="entry name" value="S72468"/>
</dbReference>
<dbReference type="VEuPathDB" id="FungiDB:PODANS_4_8950"/>
<dbReference type="GO" id="GO:0005634">
    <property type="term" value="C:nucleus"/>
    <property type="evidence" value="ECO:0000305"/>
    <property type="project" value="UniProtKB"/>
</dbReference>
<dbReference type="GO" id="GO:0005507">
    <property type="term" value="F:copper ion binding"/>
    <property type="evidence" value="ECO:0007669"/>
    <property type="project" value="InterPro"/>
</dbReference>
<dbReference type="GO" id="GO:0003700">
    <property type="term" value="F:DNA-binding transcription factor activity"/>
    <property type="evidence" value="ECO:0000314"/>
    <property type="project" value="UniProtKB"/>
</dbReference>
<dbReference type="GO" id="GO:0000981">
    <property type="term" value="F:DNA-binding transcription factor activity, RNA polymerase II-specific"/>
    <property type="evidence" value="ECO:0007669"/>
    <property type="project" value="TreeGrafter"/>
</dbReference>
<dbReference type="GO" id="GO:0000978">
    <property type="term" value="F:RNA polymerase II cis-regulatory region sequence-specific DNA binding"/>
    <property type="evidence" value="ECO:0007669"/>
    <property type="project" value="TreeGrafter"/>
</dbReference>
<dbReference type="GO" id="GO:0008270">
    <property type="term" value="F:zinc ion binding"/>
    <property type="evidence" value="ECO:0000250"/>
    <property type="project" value="UniProtKB"/>
</dbReference>
<dbReference type="GO" id="GO:0006878">
    <property type="term" value="P:intracellular copper ion homeostasis"/>
    <property type="evidence" value="ECO:0000314"/>
    <property type="project" value="UniProtKB"/>
</dbReference>
<dbReference type="GO" id="GO:0006879">
    <property type="term" value="P:intracellular iron ion homeostasis"/>
    <property type="evidence" value="ECO:0007669"/>
    <property type="project" value="TreeGrafter"/>
</dbReference>
<dbReference type="GO" id="GO:0045893">
    <property type="term" value="P:positive regulation of DNA-templated transcription"/>
    <property type="evidence" value="ECO:0000314"/>
    <property type="project" value="UniProtKB"/>
</dbReference>
<dbReference type="GO" id="GO:0045944">
    <property type="term" value="P:positive regulation of transcription by RNA polymerase II"/>
    <property type="evidence" value="ECO:0007669"/>
    <property type="project" value="TreeGrafter"/>
</dbReference>
<dbReference type="FunFam" id="3.90.430.10:FF:000001">
    <property type="entry name" value="Copper fist DNA-binding protein"/>
    <property type="match status" value="1"/>
</dbReference>
<dbReference type="Gene3D" id="3.90.430.10">
    <property type="entry name" value="Copper fist DNA-binding domain"/>
    <property type="match status" value="1"/>
</dbReference>
<dbReference type="InterPro" id="IPR051763">
    <property type="entry name" value="Copper_Homeo_Regul"/>
</dbReference>
<dbReference type="InterPro" id="IPR001083">
    <property type="entry name" value="Cu_fist_DNA-bd_dom"/>
</dbReference>
<dbReference type="InterPro" id="IPR036395">
    <property type="entry name" value="Cu_fist_DNA-bd_dom_sf"/>
</dbReference>
<dbReference type="PANTHER" id="PTHR28088:SF9">
    <property type="entry name" value="TRANSCRIPTION FACTOR GRISEA, PUTATIVE (AFU_ORTHOLOGUE AFUA_1G13190)-RELATED"/>
    <property type="match status" value="1"/>
</dbReference>
<dbReference type="PANTHER" id="PTHR28088">
    <property type="entry name" value="TRANSCRIPTIONAL ACTIVATOR HAA1-RELATED"/>
    <property type="match status" value="1"/>
</dbReference>
<dbReference type="Pfam" id="PF00649">
    <property type="entry name" value="Copper-fist"/>
    <property type="match status" value="1"/>
</dbReference>
<dbReference type="PRINTS" id="PR00617">
    <property type="entry name" value="COPPERFIST"/>
</dbReference>
<dbReference type="SMART" id="SM01090">
    <property type="entry name" value="Copper-fist"/>
    <property type="match status" value="1"/>
</dbReference>
<dbReference type="SMART" id="SM00412">
    <property type="entry name" value="Cu_FIST"/>
    <property type="match status" value="1"/>
</dbReference>
<dbReference type="SUPFAM" id="SSF57879">
    <property type="entry name" value="Zinc domain conserved in yeast copper-regulated transcription factors"/>
    <property type="match status" value="1"/>
</dbReference>
<dbReference type="PROSITE" id="PS01119">
    <property type="entry name" value="COPPER_FIST_1"/>
    <property type="match status" value="1"/>
</dbReference>
<dbReference type="PROSITE" id="PS50073">
    <property type="entry name" value="COPPER_FIST_2"/>
    <property type="match status" value="1"/>
</dbReference>
<gene>
    <name evidence="9" type="primary">grisea</name>
</gene>
<reference evidence="9" key="1">
    <citation type="journal article" date="1996" name="Mol. Gen. Genet.">
        <title>GRISEA, a putative copper-activated transcription factor from Podospora anserina involved in differentiation and senescence.</title>
        <authorList>
            <person name="Osiewacz H.D."/>
            <person name="Nuber U."/>
        </authorList>
    </citation>
    <scope>NUCLEOTIDE SEQUENCE [GENOMIC DNA]</scope>
    <source>
        <strain evidence="9">s</strain>
    </source>
</reference>
<reference evidence="8" key="2">
    <citation type="journal article" date="1997" name="Proc. Natl. Acad. Sci. U.S.A.">
        <title>Mitochondrial DNA rearrangements of Podospora anserina are under the control of the nuclear gene grisea.</title>
        <authorList>
            <person name="Borghouts C."/>
            <person name="Kimpel E."/>
            <person name="Osiewacz H.D."/>
        </authorList>
    </citation>
    <scope>MUTANT GRISEA</scope>
</reference>
<reference evidence="8" key="3">
    <citation type="journal article" date="1998" name="Mol. Gen. Genet.">
        <title>GRISEA, a copper-modulated transcription factor from Podospora anserina involved in senescence and morphogenesis, is an ortholog of MAC1 in Saccharomyces cerevisiae.</title>
        <authorList>
            <person name="Borghouts C."/>
            <person name="Osiewacz H.D."/>
        </authorList>
    </citation>
    <scope>FUNCTION</scope>
</reference>
<reference evidence="8" key="4">
    <citation type="journal article" date="2001" name="Mol. Cell. Biol.">
        <title>Copper-modulated gene expression and senescence in the filamentous fungus Podospora anserina.</title>
        <authorList>
            <person name="Borghouts C."/>
            <person name="Werner A."/>
            <person name="Elthon T."/>
            <person name="Osiewacz H.D."/>
        </authorList>
    </citation>
    <scope>FUNCTION</scope>
</reference>
<reference evidence="8" key="5">
    <citation type="journal article" date="2002" name="Int. J. Biochem. Cell Biol.">
        <title>Copper homeostasis and aging in the fungal model system Podospora anserina: differential expression of PaCtr3 encoding a copper transporter.</title>
        <authorList>
            <person name="Borghouts C."/>
            <person name="Scheckhuber C.Q."/>
            <person name="Stephan O."/>
            <person name="Osiewacz H.D."/>
        </authorList>
    </citation>
    <scope>FUNCTION</scope>
</reference>
<protein>
    <recommendedName>
        <fullName>Protein GRISEA</fullName>
    </recommendedName>
    <alternativeName>
        <fullName>MAC1 homolog</fullName>
    </alternativeName>
</protein>
<sequence>MPIINGQKMACGPCIRGHRSTKCNHYNERVMVPVRKPGRPLSTCPCPPGKPCVCGGVRVAIPKKQKCHCPAGTVDSATSSEFDPSPVDTPISPASRTSSNRVTKSGSGSKSASRRQSLALANLERMDPNSINLIPSPNGNGMIGITAMVSPRDATFGHPMGMVPMGPRESFVPAPPPDFGGPMGYNMPPSMPPHMPPPHYPPHIQIPQHIKTENGGFVPMLNGTFVSPVPIPAFVDGPHPQGMQAFNGPPPPPPSNPVLEPSAMSKPKGGSGGGGCCGGGKKAPQIQAPPPVPAPLPTPPQQQMPNIMPPPQPQNAPSGGGGSCCSSKSSQPPPMPQMSPNAMQAPPQPGFGQGFMPQYQTPIDIKMENMHHHQPFQFPGQTVFTYPAEYGSWQMPINPAIWQQVVSRPPTQQQHETPISATAPNGNNGTVGGNSHECGCGEGCQCVGCLAHPFNSQMLQYVQNAYSPNSSHGNSGSADSSANASPSANPLNLASPVEIPSGPELPPSHQTQPQPPPRPNANESDGSSNAPTPPNEGSPALSNEEELTALDYYFVHLPISALCGGALDMCPCDESCECVGCLVHNTAGFPQGDGGFS</sequence>
<organism>
    <name type="scientific">Podospora anserina</name>
    <name type="common">Pleurage anserina</name>
    <dbReference type="NCBI Taxonomy" id="2587412"/>
    <lineage>
        <taxon>Eukaryota</taxon>
        <taxon>Fungi</taxon>
        <taxon>Dikarya</taxon>
        <taxon>Ascomycota</taxon>
        <taxon>Pezizomycotina</taxon>
        <taxon>Sordariomycetes</taxon>
        <taxon>Sordariomycetidae</taxon>
        <taxon>Sordariales</taxon>
        <taxon>Podosporaceae</taxon>
        <taxon>Podospora</taxon>
    </lineage>
</organism>
<proteinExistence type="inferred from homology"/>
<name>GRISA_PODAS</name>
<evidence type="ECO:0000250" key="1"/>
<evidence type="ECO:0000250" key="2">
    <source>
        <dbReference type="UniProtKB" id="P41772"/>
    </source>
</evidence>
<evidence type="ECO:0000255" key="3">
    <source>
        <dbReference type="PROSITE-ProRule" id="PRU00055"/>
    </source>
</evidence>
<evidence type="ECO:0000256" key="4">
    <source>
        <dbReference type="SAM" id="MobiDB-lite"/>
    </source>
</evidence>
<evidence type="ECO:0000269" key="5">
    <source>
    </source>
</evidence>
<evidence type="ECO:0000269" key="6">
    <source>
    </source>
</evidence>
<evidence type="ECO:0000269" key="7">
    <source>
    </source>
</evidence>
<evidence type="ECO:0000305" key="8"/>
<evidence type="ECO:0000312" key="9">
    <source>
        <dbReference type="EMBL" id="CAA61598.1"/>
    </source>
</evidence>